<dbReference type="EC" id="5.3.1.12" evidence="1"/>
<dbReference type="EMBL" id="CP000783">
    <property type="protein sequence ID" value="ABU78718.1"/>
    <property type="molecule type" value="Genomic_DNA"/>
</dbReference>
<dbReference type="RefSeq" id="WP_012125925.1">
    <property type="nucleotide sequence ID" value="NC_009778.1"/>
</dbReference>
<dbReference type="SMR" id="A7MIR9"/>
<dbReference type="KEGG" id="esa:ESA_03503"/>
<dbReference type="PATRIC" id="fig|290339.8.peg.3116"/>
<dbReference type="HOGENOM" id="CLU_044465_1_0_6"/>
<dbReference type="UniPathway" id="UPA00246"/>
<dbReference type="Proteomes" id="UP000000260">
    <property type="component" value="Chromosome"/>
</dbReference>
<dbReference type="GO" id="GO:0008880">
    <property type="term" value="F:glucuronate isomerase activity"/>
    <property type="evidence" value="ECO:0007669"/>
    <property type="project" value="UniProtKB-UniRule"/>
</dbReference>
<dbReference type="GO" id="GO:0019698">
    <property type="term" value="P:D-galacturonate catabolic process"/>
    <property type="evidence" value="ECO:0007669"/>
    <property type="project" value="TreeGrafter"/>
</dbReference>
<dbReference type="GO" id="GO:0042840">
    <property type="term" value="P:D-glucuronate catabolic process"/>
    <property type="evidence" value="ECO:0007669"/>
    <property type="project" value="TreeGrafter"/>
</dbReference>
<dbReference type="FunFam" id="1.10.2020.10:FF:000001">
    <property type="entry name" value="Uronate isomerase"/>
    <property type="match status" value="1"/>
</dbReference>
<dbReference type="Gene3D" id="3.20.20.140">
    <property type="entry name" value="Metal-dependent hydrolases"/>
    <property type="match status" value="1"/>
</dbReference>
<dbReference type="Gene3D" id="1.10.2020.10">
    <property type="entry name" value="uronate isomerase, domain 2, chain A"/>
    <property type="match status" value="1"/>
</dbReference>
<dbReference type="HAMAP" id="MF_00675">
    <property type="entry name" value="UxaC"/>
    <property type="match status" value="1"/>
</dbReference>
<dbReference type="InterPro" id="IPR032466">
    <property type="entry name" value="Metal_Hydrolase"/>
</dbReference>
<dbReference type="InterPro" id="IPR003766">
    <property type="entry name" value="Uronate_isomerase"/>
</dbReference>
<dbReference type="NCBIfam" id="NF002794">
    <property type="entry name" value="PRK02925.1"/>
    <property type="match status" value="1"/>
</dbReference>
<dbReference type="PANTHER" id="PTHR30068">
    <property type="entry name" value="URONATE ISOMERASE"/>
    <property type="match status" value="1"/>
</dbReference>
<dbReference type="PANTHER" id="PTHR30068:SF4">
    <property type="entry name" value="URONATE ISOMERASE"/>
    <property type="match status" value="1"/>
</dbReference>
<dbReference type="Pfam" id="PF02614">
    <property type="entry name" value="UxaC"/>
    <property type="match status" value="1"/>
</dbReference>
<dbReference type="SUPFAM" id="SSF51556">
    <property type="entry name" value="Metallo-dependent hydrolases"/>
    <property type="match status" value="1"/>
</dbReference>
<organism>
    <name type="scientific">Cronobacter sakazakii (strain ATCC BAA-894)</name>
    <name type="common">Enterobacter sakazakii</name>
    <dbReference type="NCBI Taxonomy" id="290339"/>
    <lineage>
        <taxon>Bacteria</taxon>
        <taxon>Pseudomonadati</taxon>
        <taxon>Pseudomonadota</taxon>
        <taxon>Gammaproteobacteria</taxon>
        <taxon>Enterobacterales</taxon>
        <taxon>Enterobacteriaceae</taxon>
        <taxon>Cronobacter</taxon>
    </lineage>
</organism>
<proteinExistence type="inferred from homology"/>
<keyword id="KW-0413">Isomerase</keyword>
<keyword id="KW-1185">Reference proteome</keyword>
<feature type="chain" id="PRO_1000044766" description="Uronate isomerase">
    <location>
        <begin position="1"/>
        <end position="470"/>
    </location>
</feature>
<name>UXAC_CROS8</name>
<accession>A7MIR9</accession>
<comment type="catalytic activity">
    <reaction evidence="1">
        <text>D-glucuronate = D-fructuronate</text>
        <dbReference type="Rhea" id="RHEA:13049"/>
        <dbReference type="ChEBI" id="CHEBI:58720"/>
        <dbReference type="ChEBI" id="CHEBI:59863"/>
        <dbReference type="EC" id="5.3.1.12"/>
    </reaction>
</comment>
<comment type="catalytic activity">
    <reaction evidence="1">
        <text>aldehydo-D-galacturonate = keto-D-tagaturonate</text>
        <dbReference type="Rhea" id="RHEA:27702"/>
        <dbReference type="ChEBI" id="CHEBI:12952"/>
        <dbReference type="ChEBI" id="CHEBI:17886"/>
        <dbReference type="EC" id="5.3.1.12"/>
    </reaction>
</comment>
<comment type="pathway">
    <text evidence="1">Carbohydrate metabolism; pentose and glucuronate interconversion.</text>
</comment>
<comment type="similarity">
    <text evidence="1">Belongs to the metallo-dependent hydrolases superfamily. Uronate isomerase family.</text>
</comment>
<protein>
    <recommendedName>
        <fullName evidence="1">Uronate isomerase</fullName>
        <ecNumber evidence="1">5.3.1.12</ecNumber>
    </recommendedName>
    <alternativeName>
        <fullName evidence="1">Glucuronate isomerase</fullName>
    </alternativeName>
    <alternativeName>
        <fullName evidence="1">Uronic isomerase</fullName>
    </alternativeName>
</protein>
<evidence type="ECO:0000255" key="1">
    <source>
        <dbReference type="HAMAP-Rule" id="MF_00675"/>
    </source>
</evidence>
<sequence>MTPFMTEDFLLDTEFARRLYHDYAKDQPIFDYHCHLPPQQIAENYRFKNLYDIWLKGDHYKWRAMRTNGVPERLCTGDASDREKFDAWAATVPHTIGNPLYHWTHLELRRPFGITGKLLSPKTADEIWNQCNDLLAQDAFSARGIMQQMNVKMVGTTDDPIDSLEHHATIAKDSAFTVKVLPSWRPDKAFNIEQATFADYMAKLAEVSDTDIRRFSDLQTALTKRLDHFAAHGCKVSDHALDVVLFAEASESELNAILSRRLAGETLSGHEIAQFKTAVLVWLGAEYARRGWVQQYHIGALRNNNQRQFRLLGPDVGFDSINDRPLAEELSKLLSKQNEENLLPKTILYCLNPRDNEVLGTMIGNFQGEGMPGKMQFGSGWWFNDQKDGMERQMTQLAQLGLLSRFVGMLTDSRSFLSYTRHEYFRRILCQMIGRWVEAGEAPADIDLLGEMVKNICFNNARDYFAIELH</sequence>
<reference key="1">
    <citation type="journal article" date="2010" name="PLoS ONE">
        <title>Genome sequence of Cronobacter sakazakii BAA-894 and comparative genomic hybridization analysis with other Cronobacter species.</title>
        <authorList>
            <person name="Kucerova E."/>
            <person name="Clifton S.W."/>
            <person name="Xia X.Q."/>
            <person name="Long F."/>
            <person name="Porwollik S."/>
            <person name="Fulton L."/>
            <person name="Fronick C."/>
            <person name="Minx P."/>
            <person name="Kyung K."/>
            <person name="Warren W."/>
            <person name="Fulton R."/>
            <person name="Feng D."/>
            <person name="Wollam A."/>
            <person name="Shah N."/>
            <person name="Bhonagiri V."/>
            <person name="Nash W.E."/>
            <person name="Hallsworth-Pepin K."/>
            <person name="Wilson R.K."/>
            <person name="McClelland M."/>
            <person name="Forsythe S.J."/>
        </authorList>
    </citation>
    <scope>NUCLEOTIDE SEQUENCE [LARGE SCALE GENOMIC DNA]</scope>
    <source>
        <strain>ATCC BAA-894</strain>
    </source>
</reference>
<gene>
    <name evidence="1" type="primary">uxaC</name>
    <name type="ordered locus">ESA_03503</name>
</gene>